<accession>P0A5K5</accession>
<accession>A0A1R3Y368</accession>
<accession>O05788</accession>
<accession>X2BMM8</accession>
<gene>
    <name type="primary">moaC1</name>
    <name type="synonym">moaC</name>
    <name type="ordered locus">BQ2027_MB3138</name>
</gene>
<comment type="function">
    <text evidence="1">Catalyzes the conversion of (8S)-3',8-cyclo-7,8-dihydroguanosine 5'-triphosphate to cyclic pyranopterin monophosphate (cPMP).</text>
</comment>
<comment type="catalytic activity">
    <reaction evidence="1">
        <text>(8S)-3',8-cyclo-7,8-dihydroguanosine 5'-triphosphate = cyclic pyranopterin phosphate + diphosphate</text>
        <dbReference type="Rhea" id="RHEA:49580"/>
        <dbReference type="ChEBI" id="CHEBI:33019"/>
        <dbReference type="ChEBI" id="CHEBI:59648"/>
        <dbReference type="ChEBI" id="CHEBI:131766"/>
        <dbReference type="EC" id="4.6.1.17"/>
    </reaction>
</comment>
<comment type="pathway">
    <text evidence="1">Cofactor biosynthesis; molybdopterin biosynthesis.</text>
</comment>
<comment type="subunit">
    <text evidence="1">Homohexamer; trimer of dimers.</text>
</comment>
<comment type="similarity">
    <text evidence="1">Belongs to the MoaC family.</text>
</comment>
<evidence type="ECO:0000255" key="1">
    <source>
        <dbReference type="HAMAP-Rule" id="MF_01224"/>
    </source>
</evidence>
<proteinExistence type="inferred from homology"/>
<reference key="1">
    <citation type="journal article" date="2003" name="Proc. Natl. Acad. Sci. U.S.A.">
        <title>The complete genome sequence of Mycobacterium bovis.</title>
        <authorList>
            <person name="Garnier T."/>
            <person name="Eiglmeier K."/>
            <person name="Camus J.-C."/>
            <person name="Medina N."/>
            <person name="Mansoor H."/>
            <person name="Pryor M."/>
            <person name="Duthoy S."/>
            <person name="Grondin S."/>
            <person name="Lacroix C."/>
            <person name="Monsempe C."/>
            <person name="Simon S."/>
            <person name="Harris B."/>
            <person name="Atkin R."/>
            <person name="Doggett J."/>
            <person name="Mayes R."/>
            <person name="Keating L."/>
            <person name="Wheeler P.R."/>
            <person name="Parkhill J."/>
            <person name="Barrell B.G."/>
            <person name="Cole S.T."/>
            <person name="Gordon S.V."/>
            <person name="Hewinson R.G."/>
        </authorList>
    </citation>
    <scope>NUCLEOTIDE SEQUENCE [LARGE SCALE GENOMIC DNA]</scope>
    <source>
        <strain>ATCC BAA-935 / AF2122/97</strain>
    </source>
</reference>
<reference key="2">
    <citation type="journal article" date="2017" name="Genome Announc.">
        <title>Updated reference genome sequence and annotation of Mycobacterium bovis AF2122/97.</title>
        <authorList>
            <person name="Malone K.M."/>
            <person name="Farrell D."/>
            <person name="Stuber T.P."/>
            <person name="Schubert O.T."/>
            <person name="Aebersold R."/>
            <person name="Robbe-Austerman S."/>
            <person name="Gordon S.V."/>
        </authorList>
    </citation>
    <scope>NUCLEOTIDE SEQUENCE [LARGE SCALE GENOMIC DNA]</scope>
    <scope>GENOME REANNOTATION</scope>
    <source>
        <strain>ATCC BAA-935 / AF2122/97</strain>
    </source>
</reference>
<keyword id="KW-0456">Lyase</keyword>
<keyword id="KW-0501">Molybdenum cofactor biosynthesis</keyword>
<keyword id="KW-1185">Reference proteome</keyword>
<protein>
    <recommendedName>
        <fullName evidence="1">Cyclic pyranopterin monophosphate synthase 1</fullName>
        <ecNumber evidence="1">4.6.1.17</ecNumber>
    </recommendedName>
    <alternativeName>
        <fullName evidence="1">Molybdenum cofactor biosynthesis protein C 1</fullName>
    </alternativeName>
</protein>
<dbReference type="EC" id="4.6.1.17" evidence="1"/>
<dbReference type="EMBL" id="LT708304">
    <property type="protein sequence ID" value="SIU01764.1"/>
    <property type="molecule type" value="Genomic_DNA"/>
</dbReference>
<dbReference type="RefSeq" id="NP_856783.1">
    <property type="nucleotide sequence ID" value="NC_002945.3"/>
</dbReference>
<dbReference type="RefSeq" id="WP_003899917.1">
    <property type="nucleotide sequence ID" value="NC_002945.4"/>
</dbReference>
<dbReference type="SMR" id="P0A5K5"/>
<dbReference type="KEGG" id="mbo:BQ2027_MB3138"/>
<dbReference type="PATRIC" id="fig|233413.5.peg.3449"/>
<dbReference type="UniPathway" id="UPA00344"/>
<dbReference type="Proteomes" id="UP000001419">
    <property type="component" value="Chromosome"/>
</dbReference>
<dbReference type="GO" id="GO:0061799">
    <property type="term" value="F:cyclic pyranopterin monophosphate synthase activity"/>
    <property type="evidence" value="ECO:0007669"/>
    <property type="project" value="UniProtKB-UniRule"/>
</dbReference>
<dbReference type="GO" id="GO:0006777">
    <property type="term" value="P:Mo-molybdopterin cofactor biosynthetic process"/>
    <property type="evidence" value="ECO:0007669"/>
    <property type="project" value="UniProtKB-UniRule"/>
</dbReference>
<dbReference type="CDD" id="cd01420">
    <property type="entry name" value="MoaC_PE"/>
    <property type="match status" value="1"/>
</dbReference>
<dbReference type="FunFam" id="3.30.70.640:FF:000001">
    <property type="entry name" value="Cyclic pyranopterin monophosphate synthase"/>
    <property type="match status" value="1"/>
</dbReference>
<dbReference type="Gene3D" id="3.30.70.640">
    <property type="entry name" value="Molybdopterin cofactor biosynthesis C (MoaC) domain"/>
    <property type="match status" value="1"/>
</dbReference>
<dbReference type="HAMAP" id="MF_01224_B">
    <property type="entry name" value="MoaC_B"/>
    <property type="match status" value="1"/>
</dbReference>
<dbReference type="InterPro" id="IPR023045">
    <property type="entry name" value="MoaC"/>
</dbReference>
<dbReference type="InterPro" id="IPR047594">
    <property type="entry name" value="MoaC_bact/euk"/>
</dbReference>
<dbReference type="InterPro" id="IPR036522">
    <property type="entry name" value="MoaC_sf"/>
</dbReference>
<dbReference type="InterPro" id="IPR050105">
    <property type="entry name" value="MoCo_biosynth_MoaA/MoaC"/>
</dbReference>
<dbReference type="InterPro" id="IPR002820">
    <property type="entry name" value="Mopterin_CF_biosynth-C_dom"/>
</dbReference>
<dbReference type="NCBIfam" id="TIGR00581">
    <property type="entry name" value="moaC"/>
    <property type="match status" value="1"/>
</dbReference>
<dbReference type="NCBIfam" id="NF006870">
    <property type="entry name" value="PRK09364.1"/>
    <property type="match status" value="1"/>
</dbReference>
<dbReference type="PANTHER" id="PTHR22960:SF29">
    <property type="entry name" value="CYCLIC PYRANOPTERIN MONOPHOSPHATE SYNTHASE"/>
    <property type="match status" value="1"/>
</dbReference>
<dbReference type="PANTHER" id="PTHR22960">
    <property type="entry name" value="MOLYBDOPTERIN COFACTOR SYNTHESIS PROTEIN A"/>
    <property type="match status" value="1"/>
</dbReference>
<dbReference type="Pfam" id="PF01967">
    <property type="entry name" value="MoaC"/>
    <property type="match status" value="1"/>
</dbReference>
<dbReference type="SUPFAM" id="SSF55040">
    <property type="entry name" value="Molybdenum cofactor biosynthesis protein C, MoaC"/>
    <property type="match status" value="1"/>
</dbReference>
<feature type="chain" id="PRO_0000097811" description="Cyclic pyranopterin monophosphate synthase 1">
    <location>
        <begin position="1"/>
        <end position="170"/>
    </location>
</feature>
<feature type="active site" evidence="1">
    <location>
        <position position="131"/>
    </location>
</feature>
<feature type="binding site" evidence="1">
    <location>
        <begin position="79"/>
        <end position="81"/>
    </location>
    <ligand>
        <name>substrate</name>
    </ligand>
</feature>
<feature type="binding site" evidence="1">
    <location>
        <begin position="116"/>
        <end position="117"/>
    </location>
    <ligand>
        <name>substrate</name>
    </ligand>
</feature>
<name>MOAC1_MYCBO</name>
<organism>
    <name type="scientific">Mycobacterium bovis (strain ATCC BAA-935 / AF2122/97)</name>
    <dbReference type="NCBI Taxonomy" id="233413"/>
    <lineage>
        <taxon>Bacteria</taxon>
        <taxon>Bacillati</taxon>
        <taxon>Actinomycetota</taxon>
        <taxon>Actinomycetes</taxon>
        <taxon>Mycobacteriales</taxon>
        <taxon>Mycobacteriaceae</taxon>
        <taxon>Mycobacterium</taxon>
        <taxon>Mycobacterium tuberculosis complex</taxon>
    </lineage>
</organism>
<sequence>MIDHALALTHIDERGAARMVDVSEKPVTLRVAKASGLVIMKPSTLRMISDGAAAKGDVMAAARIAGIAAAKRTGDLIPLCHPLGLDAVSVTITPCEPDRVKILATTTTLGRTGVEMEALTAVSVAALTIYDMCKAVDRAMEISQIVLQEKSGGRSGVYRRSASDLACQSR</sequence>